<accession>B3LLX6</accession>
<gene>
    <name type="ORF">SCRG_01975</name>
</gene>
<organism>
    <name type="scientific">Saccharomyces cerevisiae (strain RM11-1a)</name>
    <name type="common">Baker's yeast</name>
    <dbReference type="NCBI Taxonomy" id="285006"/>
    <lineage>
        <taxon>Eukaryota</taxon>
        <taxon>Fungi</taxon>
        <taxon>Dikarya</taxon>
        <taxon>Ascomycota</taxon>
        <taxon>Saccharomycotina</taxon>
        <taxon>Saccharomycetes</taxon>
        <taxon>Saccharomycetales</taxon>
        <taxon>Saccharomycetaceae</taxon>
        <taxon>Saccharomyces</taxon>
    </lineage>
</organism>
<protein>
    <recommendedName>
        <fullName>Putative glutamine--fructose-6-phosphate aminotransferase [isomerizing]</fullName>
        <shortName>GFAT</shortName>
        <ecNumber>2.6.1.16</ecNumber>
    </recommendedName>
    <alternativeName>
        <fullName>D-fructose-6-phosphate amidotransferase</fullName>
    </alternativeName>
    <alternativeName>
        <fullName>Hexosephosphate aminotransferase</fullName>
    </alternativeName>
</protein>
<evidence type="ECO:0000250" key="1"/>
<evidence type="ECO:0000255" key="2">
    <source>
        <dbReference type="PROSITE-ProRule" id="PRU00609"/>
    </source>
</evidence>
<evidence type="ECO:0000255" key="3">
    <source>
        <dbReference type="PROSITE-ProRule" id="PRU00797"/>
    </source>
</evidence>
<evidence type="ECO:0000256" key="4">
    <source>
        <dbReference type="SAM" id="MobiDB-lite"/>
    </source>
</evidence>
<keyword id="KW-0032">Aminotransferase</keyword>
<keyword id="KW-0315">Glutamine amidotransferase</keyword>
<keyword id="KW-0677">Repeat</keyword>
<keyword id="KW-0808">Transferase</keyword>
<sequence length="720" mass="80557">MCGIFGYCNFLIEKTRGEIIDTLIEGLQALEYKEYDSSGISIQGDELKSLNIYKQTGKISSLKEEIDLYNLNKNLPFISHCGIAHTRRATHGGLRRANCHPHNSDPSNEFVVVHNGVITNFANLKALLVAKGYVFKSDTDTECIPKLYKHIYDTSIELGYNLDFHVLTNLVLKELEGSYGLLCTSSHFPDEVVAARKGSPLVIGVKGKTDMDVNFVEVEYLDQEEDYLKLNTQTKSSGNVLAAAPVKYNTCLRKSPPLRSQYLRNSTTSTFNHGSSTETPAENGLPRPMEFYLSSDCASLARYVSKVVYLEDNDIAHIYDGELHIHCSKIGSEDFSFRTVQKLELELSKIKKGPYDNFMQKEIYEQCETTKNVMRGRVDAFTNRVVLGGLENWLTELRRAKRIIMIASKSSFHSCLAARPIFEELMEVPVNVELALDFVDRNCCIFRNDVCIFVSRSGETTDTINALNYCIKKEAVTIGVVNCSGSSISRFTHCGVHTNTGPEKGIATTKSYTSQYIALVMIALWMSEDLVSKIERRKEIIQALTIIPSQIKEVLELEPLIIELCDKKLKQHDTFLLLGRGYQFASALEGASKMKEISYVHSESILTDELGHRVLAVASDNPPIIAFATKDAFSPKIASCIDQIIERKGNPIIICNKGHKIWEQDKQKGNVVTLEVPQTVDCLQGILNVIPLQLISYWLAIKKDIGVDLPRDSAMSAPDI</sequence>
<comment type="function">
    <text evidence="1">Involved in amino sugar synthesis (formation of chitin, supplies the amino sugars of asparagine-linked oligosaccharides of glycoproteins).</text>
</comment>
<comment type="catalytic activity">
    <reaction>
        <text>D-fructose 6-phosphate + L-glutamine = D-glucosamine 6-phosphate + L-glutamate</text>
        <dbReference type="Rhea" id="RHEA:13237"/>
        <dbReference type="ChEBI" id="CHEBI:29985"/>
        <dbReference type="ChEBI" id="CHEBI:58359"/>
        <dbReference type="ChEBI" id="CHEBI:58725"/>
        <dbReference type="ChEBI" id="CHEBI:61527"/>
        <dbReference type="EC" id="2.6.1.16"/>
    </reaction>
</comment>
<comment type="pathway">
    <text>Nucleotide-sugar biosynthesis; UDP-N-acetyl-alpha-D-glucosamine biosynthesis; alpha-D-glucosamine 6-phosphate from D-fructose 6-phosphate: step 1/1.</text>
</comment>
<feature type="chain" id="PRO_0000377747" description="Putative glutamine--fructose-6-phosphate aminotransferase [isomerizing]">
    <location>
        <begin position="1"/>
        <end position="720"/>
    </location>
</feature>
<feature type="domain" description="Glutamine amidotransferase type-2" evidence="2">
    <location>
        <begin position="2"/>
        <end position="321"/>
    </location>
</feature>
<feature type="domain" description="SIS 1" evidence="3">
    <location>
        <begin position="393"/>
        <end position="532"/>
    </location>
</feature>
<feature type="domain" description="SIS 2" evidence="3">
    <location>
        <begin position="565"/>
        <end position="710"/>
    </location>
</feature>
<feature type="region of interest" description="Disordered" evidence="4">
    <location>
        <begin position="266"/>
        <end position="285"/>
    </location>
</feature>
<feature type="compositionally biased region" description="Polar residues" evidence="4">
    <location>
        <begin position="266"/>
        <end position="280"/>
    </location>
</feature>
<feature type="active site" description="Nucleophile; for GATase activity" evidence="2">
    <location>
        <position position="2"/>
    </location>
</feature>
<dbReference type="EC" id="2.6.1.16"/>
<dbReference type="EMBL" id="CH408047">
    <property type="protein sequence ID" value="EDV11579.1"/>
    <property type="molecule type" value="Genomic_DNA"/>
</dbReference>
<dbReference type="SMR" id="B3LLX6"/>
<dbReference type="HOGENOM" id="CLU_012520_5_2_1"/>
<dbReference type="OrthoDB" id="13837at4893"/>
<dbReference type="UniPathway" id="UPA00113">
    <property type="reaction ID" value="UER00528"/>
</dbReference>
<dbReference type="Proteomes" id="UP000008335">
    <property type="component" value="Unassembled WGS sequence"/>
</dbReference>
<dbReference type="GO" id="GO:0097367">
    <property type="term" value="F:carbohydrate derivative binding"/>
    <property type="evidence" value="ECO:0007669"/>
    <property type="project" value="InterPro"/>
</dbReference>
<dbReference type="GO" id="GO:0004360">
    <property type="term" value="F:glutamine-fructose-6-phosphate transaminase (isomerizing) activity"/>
    <property type="evidence" value="ECO:0007669"/>
    <property type="project" value="UniProtKB-EC"/>
</dbReference>
<dbReference type="GO" id="GO:0006002">
    <property type="term" value="P:fructose 6-phosphate metabolic process"/>
    <property type="evidence" value="ECO:0007669"/>
    <property type="project" value="TreeGrafter"/>
</dbReference>
<dbReference type="GO" id="GO:0006487">
    <property type="term" value="P:protein N-linked glycosylation"/>
    <property type="evidence" value="ECO:0007669"/>
    <property type="project" value="TreeGrafter"/>
</dbReference>
<dbReference type="GO" id="GO:0006048">
    <property type="term" value="P:UDP-N-acetylglucosamine biosynthetic process"/>
    <property type="evidence" value="ECO:0007669"/>
    <property type="project" value="UniProtKB-UniPathway"/>
</dbReference>
<dbReference type="CDD" id="cd00714">
    <property type="entry name" value="GFAT"/>
    <property type="match status" value="1"/>
</dbReference>
<dbReference type="CDD" id="cd05008">
    <property type="entry name" value="SIS_GlmS_GlmD_1"/>
    <property type="match status" value="1"/>
</dbReference>
<dbReference type="CDD" id="cd05009">
    <property type="entry name" value="SIS_GlmS_GlmD_2"/>
    <property type="match status" value="1"/>
</dbReference>
<dbReference type="FunFam" id="3.40.50.10490:FF:000001">
    <property type="entry name" value="Glutamine--fructose-6-phosphate aminotransferase [isomerizing]"/>
    <property type="match status" value="1"/>
</dbReference>
<dbReference type="FunFam" id="3.40.50.10490:FF:000002">
    <property type="entry name" value="Glutamine--fructose-6-phosphate aminotransferase [isomerizing]"/>
    <property type="match status" value="1"/>
</dbReference>
<dbReference type="Gene3D" id="3.40.50.10490">
    <property type="entry name" value="Glucose-6-phosphate isomerase like protein, domain 1"/>
    <property type="match status" value="2"/>
</dbReference>
<dbReference type="Gene3D" id="3.60.20.10">
    <property type="entry name" value="Glutamine Phosphoribosylpyrophosphate, subunit 1, domain 1"/>
    <property type="match status" value="1"/>
</dbReference>
<dbReference type="InterPro" id="IPR017932">
    <property type="entry name" value="GATase_2_dom"/>
</dbReference>
<dbReference type="InterPro" id="IPR047084">
    <property type="entry name" value="GFAT_N"/>
</dbReference>
<dbReference type="InterPro" id="IPR035466">
    <property type="entry name" value="GlmS/AgaS_SIS"/>
</dbReference>
<dbReference type="InterPro" id="IPR035490">
    <property type="entry name" value="GlmS/FrlB_SIS"/>
</dbReference>
<dbReference type="InterPro" id="IPR029055">
    <property type="entry name" value="Ntn_hydrolases_N"/>
</dbReference>
<dbReference type="InterPro" id="IPR001347">
    <property type="entry name" value="SIS_dom"/>
</dbReference>
<dbReference type="InterPro" id="IPR046348">
    <property type="entry name" value="SIS_dom_sf"/>
</dbReference>
<dbReference type="PANTHER" id="PTHR10937">
    <property type="entry name" value="GLUCOSAMINE--FRUCTOSE-6-PHOSPHATE AMINOTRANSFERASE, ISOMERIZING"/>
    <property type="match status" value="1"/>
</dbReference>
<dbReference type="PANTHER" id="PTHR10937:SF0">
    <property type="entry name" value="GLUTAMINE--FRUCTOSE-6-PHOSPHATE TRANSAMINASE (ISOMERIZING)"/>
    <property type="match status" value="1"/>
</dbReference>
<dbReference type="Pfam" id="PF13522">
    <property type="entry name" value="GATase_6"/>
    <property type="match status" value="1"/>
</dbReference>
<dbReference type="Pfam" id="PF01380">
    <property type="entry name" value="SIS"/>
    <property type="match status" value="2"/>
</dbReference>
<dbReference type="SUPFAM" id="SSF56235">
    <property type="entry name" value="N-terminal nucleophile aminohydrolases (Ntn hydrolases)"/>
    <property type="match status" value="1"/>
</dbReference>
<dbReference type="SUPFAM" id="SSF53697">
    <property type="entry name" value="SIS domain"/>
    <property type="match status" value="1"/>
</dbReference>
<dbReference type="PROSITE" id="PS51278">
    <property type="entry name" value="GATASE_TYPE_2"/>
    <property type="match status" value="1"/>
</dbReference>
<dbReference type="PROSITE" id="PS51464">
    <property type="entry name" value="SIS"/>
    <property type="match status" value="2"/>
</dbReference>
<name>YM084_YEAS1</name>
<reference key="1">
    <citation type="submission" date="2005-03" db="EMBL/GenBank/DDBJ databases">
        <title>Annotation of the Saccharomyces cerevisiae RM11-1a genome.</title>
        <authorList>
            <consortium name="The Broad Institute Genome Sequencing Platform"/>
            <person name="Birren B.W."/>
            <person name="Lander E.S."/>
            <person name="Galagan J.E."/>
            <person name="Nusbaum C."/>
            <person name="Devon K."/>
            <person name="Cuomo C."/>
            <person name="Jaffe D.B."/>
            <person name="Butler J."/>
            <person name="Alvarez P."/>
            <person name="Gnerre S."/>
            <person name="Grabherr M."/>
            <person name="Kleber M."/>
            <person name="Mauceli E.W."/>
            <person name="Brockman W."/>
            <person name="MacCallum I.A."/>
            <person name="Rounsley S."/>
            <person name="Young S.K."/>
            <person name="LaButti K."/>
            <person name="Pushparaj V."/>
            <person name="DeCaprio D."/>
            <person name="Crawford M."/>
            <person name="Koehrsen M."/>
            <person name="Engels R."/>
            <person name="Montgomery P."/>
            <person name="Pearson M."/>
            <person name="Howarth C."/>
            <person name="Larson L."/>
            <person name="Luoma S."/>
            <person name="White J."/>
            <person name="O'Leary S."/>
            <person name="Kodira C.D."/>
            <person name="Zeng Q."/>
            <person name="Yandava C."/>
            <person name="Alvarado L."/>
            <person name="Pratt S."/>
            <person name="Kruglyak L."/>
        </authorList>
    </citation>
    <scope>NUCLEOTIDE SEQUENCE [LARGE SCALE GENOMIC DNA]</scope>
    <source>
        <strain>RM11-1a</strain>
    </source>
</reference>
<proteinExistence type="inferred from homology"/>